<keyword id="KW-0143">Chaperone</keyword>
<keyword id="KW-1035">Host cytoplasm</keyword>
<keyword id="KW-0597">Phosphoprotein</keyword>
<keyword id="KW-0693">Viral RNA replication</keyword>
<keyword id="KW-0946">Virion</keyword>
<sequence length="274" mass="31300">MDSIDRLKTYLATYDNLDSALQDANESEERREDKYLQDLFIEDQGDKPTPSYYQEEESSDSDTDYNAEHLTMLSPDERIDKWEEDLPELEKIDDDIPVTFSDWTQPVMKENGGEKSLSLFPPVGLTKVQTDQWRKTIEAVCESSKYWNLSECQIMNSEDRLILKGRIMTPDCSSSIKSQNSIQSSESLSSSHSPGPAPKSRNQLGLWDSKSTEVQLISKRAGVKDMMVKLTDFFGSEEEYYSVCPEGAPDLMGAIIMGLKHKKLFNQARMKYRI</sequence>
<feature type="chain" id="PRO_0000222836" description="Phosphoprotein">
    <location>
        <begin position="1"/>
        <end position="274"/>
    </location>
</feature>
<feature type="region of interest" description="Interaction with N(0)" evidence="2">
    <location>
        <begin position="1"/>
        <end position="59"/>
    </location>
</feature>
<feature type="region of interest" description="Disordered" evidence="5">
    <location>
        <begin position="22"/>
        <end position="65"/>
    </location>
</feature>
<feature type="region of interest" description="Interaction with the L polymerase" evidence="2">
    <location>
        <begin position="49"/>
        <end position="101"/>
    </location>
</feature>
<feature type="region of interest" description="Oligomerization" evidence="2">
    <location>
        <begin position="104"/>
        <end position="165"/>
    </location>
</feature>
<feature type="region of interest" description="Hinge" evidence="2">
    <location>
        <begin position="166"/>
        <end position="202"/>
    </location>
</feature>
<feature type="region of interest" description="Disordered" evidence="5">
    <location>
        <begin position="174"/>
        <end position="204"/>
    </location>
</feature>
<feature type="region of interest" description="Interaction with the Nucleoprotein-RNA and template-binding" evidence="3">
    <location>
        <begin position="254"/>
        <end position="274"/>
    </location>
</feature>
<feature type="compositionally biased region" description="Basic and acidic residues" evidence="5">
    <location>
        <begin position="27"/>
        <end position="36"/>
    </location>
</feature>
<feature type="compositionally biased region" description="Acidic residues" evidence="5">
    <location>
        <begin position="54"/>
        <end position="65"/>
    </location>
</feature>
<feature type="compositionally biased region" description="Low complexity" evidence="5">
    <location>
        <begin position="174"/>
        <end position="193"/>
    </location>
</feature>
<feature type="site" description="Involved in oligomerization" evidence="4">
    <location>
        <position position="133"/>
    </location>
</feature>
<feature type="site" description="Involved in oligomerization" evidence="4">
    <location>
        <position position="136"/>
    </location>
</feature>
<feature type="site" description="Interaction with the Nucleoprotein-RNA" evidence="3">
    <location>
        <position position="260"/>
    </location>
</feature>
<feature type="modified residue" description="Phosphotyrosine; by host" evidence="2">
    <location>
        <position position="14"/>
    </location>
</feature>
<feature type="modified residue" description="Phosphoserine; by host CK2" evidence="1">
    <location>
        <position position="59"/>
    </location>
</feature>
<feature type="modified residue" description="Phosphoserine; by host CK2" evidence="1">
    <location>
        <position position="61"/>
    </location>
</feature>
<feature type="modified residue" description="Phosphoserine; by host" evidence="4">
    <location>
        <position position="236"/>
    </location>
</feature>
<feature type="modified residue" description="Phosphoserine" evidence="4">
    <location>
        <position position="242"/>
    </location>
</feature>
<evidence type="ECO:0000250" key="1"/>
<evidence type="ECO:0000250" key="2">
    <source>
        <dbReference type="UniProtKB" id="P03520"/>
    </source>
</evidence>
<evidence type="ECO:0000250" key="3">
    <source>
        <dbReference type="UniProtKB" id="P04877"/>
    </source>
</evidence>
<evidence type="ECO:0000250" key="4">
    <source>
        <dbReference type="UniProtKB" id="P04880"/>
    </source>
</evidence>
<evidence type="ECO:0000256" key="5">
    <source>
        <dbReference type="SAM" id="MobiDB-lite"/>
    </source>
</evidence>
<evidence type="ECO:0000305" key="6"/>
<reference key="1">
    <citation type="journal article" date="1986" name="J. Gen. Virol.">
        <title>Conservation of potential phosphorylation sites in the NS proteins of the New Jersey and Indiana serotypes of vesicular stomatitis virus.</title>
        <authorList>
            <person name="Rae B.P."/>
            <person name="Elliott R.M."/>
        </authorList>
    </citation>
    <scope>NUCLEOTIDE SEQUENCE [MRNA]</scope>
</reference>
<reference key="2">
    <citation type="journal article" date="1986" name="J. Gen. Virol.">
        <title>Characterization of the mutations responsible for the electrophoretic mobility differences in the NS proteins of vesicular stomatitis virus New Jersey complementation group E mutants.</title>
        <authorList>
            <person name="Rae B.P."/>
            <person name="Elliott R.M."/>
        </authorList>
    </citation>
    <scope>NUCLEOTIDE SEQUENCE [MRNA]</scope>
</reference>
<reference key="3">
    <citation type="journal article" date="1987" name="J. Gen. Virol.">
        <authorList>
            <person name="Rae B.P."/>
            <person name="Elliott R.M."/>
        </authorList>
    </citation>
    <scope>ERRATUM OF PUBMED:3025344</scope>
</reference>
<accession>P04878</accession>
<accession>Q86133</accession>
<protein>
    <recommendedName>
        <fullName>Phosphoprotein</fullName>
        <shortName>Protein P</shortName>
    </recommendedName>
    <alternativeName>
        <fullName>Protein M1</fullName>
    </alternativeName>
</protein>
<organism>
    <name type="scientific">Vesicular stomatitis New Jersey virus (strain Missouri subtype Hazelhurst)</name>
    <name type="common">VSNJV</name>
    <dbReference type="NCBI Taxonomy" id="11282"/>
    <lineage>
        <taxon>Viruses</taxon>
        <taxon>Riboviria</taxon>
        <taxon>Orthornavirae</taxon>
        <taxon>Negarnaviricota</taxon>
        <taxon>Haploviricotina</taxon>
        <taxon>Monjiviricetes</taxon>
        <taxon>Mononegavirales</taxon>
        <taxon>Rhabdoviridae</taxon>
        <taxon>Alpharhabdovirinae</taxon>
        <taxon>Vesiculovirus</taxon>
        <taxon>Vesiculovirus newjersey</taxon>
    </lineage>
</organism>
<comment type="function">
    <text evidence="2">Nonenzymatic cofactor regulating the function and conformation of the RNA polymerase and part of the transcription and replication complex. Binds the viral ribonucleocapsid and positions the L polymerase on the template. Acts as a chaperone for newly synthesized free N protein, so-called N(0). Plays a role in virion assembly.</text>
</comment>
<comment type="subunit">
    <text evidence="2 4">Homodimer (By similarity). Interacts with the L polymerase; the association of P and L forms the polymerase complex and positions P optimally for encapsidation of newly synthesized genomes with the nucleoprotein. Interacts (via N-terminus) with N(0). Interacts (via C-terminus) with N in ribonucleocapsid (via C-terminus); this interaction allows to package the L polymerase in the virion and positions the polymerase on the template, since P acts as a bridge between N and L (By similarity).</text>
</comment>
<comment type="subcellular location">
    <subcellularLocation>
        <location evidence="2">Virion</location>
    </subcellularLocation>
    <subcellularLocation>
        <location evidence="2">Host cytoplasm</location>
    </subcellularLocation>
</comment>
<comment type="domain">
    <text evidence="2">The N-terminus is disordered and is involved in binding N(0). The region of interaction with the L polymerase is necessary for transcription. The hinge region is highly variable. The central domain is involved in oligomerization. The C-terminus is basic and essential for binding the N-RNA template.</text>
</comment>
<comment type="PTM">
    <text evidence="2 3">Phosphorylated in the N-terminus by host CK2 (By similarity). Phosphorylation of the phosphoprotein is required for the transcriptional function of the P-L complex (By similarity).</text>
</comment>
<comment type="similarity">
    <text evidence="6">Belongs to the vesiculovirus protein P family.</text>
</comment>
<dbReference type="EMBL" id="X04063">
    <property type="protein sequence ID" value="CAA27695.1"/>
    <property type="molecule type" value="mRNA"/>
</dbReference>
<dbReference type="EMBL" id="X04718">
    <property type="protein sequence ID" value="CAB37190.1"/>
    <property type="molecule type" value="mRNA"/>
</dbReference>
<dbReference type="PIR" id="A29143">
    <property type="entry name" value="MNVNVM"/>
</dbReference>
<dbReference type="SMR" id="P04878"/>
<dbReference type="GO" id="GO:0030430">
    <property type="term" value="C:host cell cytoplasm"/>
    <property type="evidence" value="ECO:0007669"/>
    <property type="project" value="UniProtKB-SubCell"/>
</dbReference>
<dbReference type="GO" id="GO:0044423">
    <property type="term" value="C:virion component"/>
    <property type="evidence" value="ECO:0007669"/>
    <property type="project" value="UniProtKB-KW"/>
</dbReference>
<dbReference type="GO" id="GO:0003968">
    <property type="term" value="F:RNA-directed RNA polymerase activity"/>
    <property type="evidence" value="ECO:0007669"/>
    <property type="project" value="InterPro"/>
</dbReference>
<dbReference type="CDD" id="cd21033">
    <property type="entry name" value="VSV_P-protein-C_like"/>
    <property type="match status" value="1"/>
</dbReference>
<dbReference type="Gene3D" id="6.10.140.830">
    <property type="match status" value="1"/>
</dbReference>
<dbReference type="Gene3D" id="1.10.8.440">
    <property type="entry name" value="Vesicular stomatitis virus phosphoprotein C-terminal domain"/>
    <property type="match status" value="1"/>
</dbReference>
<dbReference type="InterPro" id="IPR048220">
    <property type="entry name" value="P-protein-C_vesiculovirus"/>
</dbReference>
<dbReference type="InterPro" id="IPR043036">
    <property type="entry name" value="Phosphoprotein_C_viral"/>
</dbReference>
<dbReference type="InterPro" id="IPR037263">
    <property type="entry name" value="Phosphoprotein_central"/>
</dbReference>
<dbReference type="SUPFAM" id="SSF160892">
    <property type="entry name" value="Phosphoprotein oligomerization domain-like"/>
    <property type="match status" value="1"/>
</dbReference>
<proteinExistence type="evidence at transcript level"/>
<name>PHOSP_VSNJM</name>
<gene>
    <name type="primary">P</name>
</gene>
<organismHost>
    <name type="scientific">Aedes</name>
    <dbReference type="NCBI Taxonomy" id="7158"/>
</organismHost>
<organismHost>
    <name type="scientific">Bos taurus</name>
    <name type="common">Bovine</name>
    <dbReference type="NCBI Taxonomy" id="9913"/>
</organismHost>
<organismHost>
    <name type="scientific">Culicoides</name>
    <dbReference type="NCBI Taxonomy" id="58271"/>
</organismHost>
<organismHost>
    <name type="scientific">Equus asinus</name>
    <name type="common">Donkey</name>
    <name type="synonym">Equus africanus asinus</name>
    <dbReference type="NCBI Taxonomy" id="9793"/>
</organismHost>
<organismHost>
    <name type="scientific">Equus caballus</name>
    <name type="common">Horse</name>
    <dbReference type="NCBI Taxonomy" id="9796"/>
</organismHost>
<organismHost>
    <name type="scientific">Homo sapiens</name>
    <name type="common">Human</name>
    <dbReference type="NCBI Taxonomy" id="9606"/>
</organismHost>
<organismHost>
    <name type="scientific">Lutzomyia</name>
    <dbReference type="NCBI Taxonomy" id="252607"/>
</organismHost>
<organismHost>
    <name type="scientific">Musca domestica</name>
    <name type="common">House fly</name>
    <dbReference type="NCBI Taxonomy" id="7370"/>
</organismHost>
<organismHost>
    <name type="scientific">Simuliidae</name>
    <name type="common">black flies</name>
    <dbReference type="NCBI Taxonomy" id="7190"/>
</organismHost>
<organismHost>
    <name type="scientific">Sus scrofa</name>
    <name type="common">Pig</name>
    <dbReference type="NCBI Taxonomy" id="9823"/>
</organismHost>